<comment type="function">
    <text evidence="1">Functions in the biosynthesis of branched-chain amino acids. Catalyzes the dehydration of (2R,3R)-2,3-dihydroxy-3-methylpentanoate (2,3-dihydroxy-3-methylvalerate) into 2-oxo-3-methylpentanoate (2-oxo-3-methylvalerate) and of (2R)-2,3-dihydroxy-3-methylbutanoate (2,3-dihydroxyisovalerate) into 2-oxo-3-methylbutanoate (2-oxoisovalerate), the penultimate precursor to L-isoleucine and L-valine, respectively.</text>
</comment>
<comment type="catalytic activity">
    <reaction evidence="1">
        <text>(2R)-2,3-dihydroxy-3-methylbutanoate = 3-methyl-2-oxobutanoate + H2O</text>
        <dbReference type="Rhea" id="RHEA:24809"/>
        <dbReference type="ChEBI" id="CHEBI:11851"/>
        <dbReference type="ChEBI" id="CHEBI:15377"/>
        <dbReference type="ChEBI" id="CHEBI:49072"/>
        <dbReference type="EC" id="4.2.1.9"/>
    </reaction>
    <physiologicalReaction direction="left-to-right" evidence="1">
        <dbReference type="Rhea" id="RHEA:24810"/>
    </physiologicalReaction>
</comment>
<comment type="catalytic activity">
    <reaction evidence="1">
        <text>(2R,3R)-2,3-dihydroxy-3-methylpentanoate = (S)-3-methyl-2-oxopentanoate + H2O</text>
        <dbReference type="Rhea" id="RHEA:27694"/>
        <dbReference type="ChEBI" id="CHEBI:15377"/>
        <dbReference type="ChEBI" id="CHEBI:35146"/>
        <dbReference type="ChEBI" id="CHEBI:49258"/>
        <dbReference type="EC" id="4.2.1.9"/>
    </reaction>
    <physiologicalReaction direction="left-to-right" evidence="1">
        <dbReference type="Rhea" id="RHEA:27695"/>
    </physiologicalReaction>
</comment>
<comment type="cofactor">
    <cofactor evidence="1">
        <name>[2Fe-2S] cluster</name>
        <dbReference type="ChEBI" id="CHEBI:190135"/>
    </cofactor>
    <text evidence="1">Binds 1 [2Fe-2S] cluster per subunit. This cluster acts as a Lewis acid cofactor.</text>
</comment>
<comment type="cofactor">
    <cofactor evidence="1">
        <name>Mg(2+)</name>
        <dbReference type="ChEBI" id="CHEBI:18420"/>
    </cofactor>
</comment>
<comment type="pathway">
    <text evidence="1">Amino-acid biosynthesis; L-isoleucine biosynthesis; L-isoleucine from 2-oxobutanoate: step 3/4.</text>
</comment>
<comment type="pathway">
    <text evidence="1">Amino-acid biosynthesis; L-valine biosynthesis; L-valine from pyruvate: step 3/4.</text>
</comment>
<comment type="subunit">
    <text evidence="1">Homodimer.</text>
</comment>
<comment type="similarity">
    <text evidence="1">Belongs to the IlvD/Edd family.</text>
</comment>
<feature type="chain" id="PRO_1000057099" description="Dihydroxy-acid dehydratase">
    <location>
        <begin position="1"/>
        <end position="557"/>
    </location>
</feature>
<feature type="active site" description="Proton acceptor" evidence="1">
    <location>
        <position position="472"/>
    </location>
</feature>
<feature type="binding site" evidence="1">
    <location>
        <position position="49"/>
    </location>
    <ligand>
        <name>[2Fe-2S] cluster</name>
        <dbReference type="ChEBI" id="CHEBI:190135"/>
    </ligand>
</feature>
<feature type="binding site" evidence="1">
    <location>
        <position position="81"/>
    </location>
    <ligand>
        <name>Mg(2+)</name>
        <dbReference type="ChEBI" id="CHEBI:18420"/>
    </ligand>
</feature>
<feature type="binding site" evidence="1">
    <location>
        <position position="122"/>
    </location>
    <ligand>
        <name>[2Fe-2S] cluster</name>
        <dbReference type="ChEBI" id="CHEBI:190135"/>
    </ligand>
</feature>
<feature type="binding site" evidence="1">
    <location>
        <position position="123"/>
    </location>
    <ligand>
        <name>Mg(2+)</name>
        <dbReference type="ChEBI" id="CHEBI:18420"/>
    </ligand>
</feature>
<feature type="binding site" description="via carbamate group" evidence="1">
    <location>
        <position position="124"/>
    </location>
    <ligand>
        <name>Mg(2+)</name>
        <dbReference type="ChEBI" id="CHEBI:18420"/>
    </ligand>
</feature>
<feature type="binding site" evidence="1">
    <location>
        <position position="194"/>
    </location>
    <ligand>
        <name>[2Fe-2S] cluster</name>
        <dbReference type="ChEBI" id="CHEBI:190135"/>
    </ligand>
</feature>
<feature type="binding site" evidence="1">
    <location>
        <position position="446"/>
    </location>
    <ligand>
        <name>Mg(2+)</name>
        <dbReference type="ChEBI" id="CHEBI:18420"/>
    </ligand>
</feature>
<feature type="modified residue" description="N6-carboxylysine" evidence="1">
    <location>
        <position position="124"/>
    </location>
</feature>
<keyword id="KW-0001">2Fe-2S</keyword>
<keyword id="KW-0028">Amino-acid biosynthesis</keyword>
<keyword id="KW-0100">Branched-chain amino acid biosynthesis</keyword>
<keyword id="KW-0408">Iron</keyword>
<keyword id="KW-0411">Iron-sulfur</keyword>
<keyword id="KW-0456">Lyase</keyword>
<keyword id="KW-0460">Magnesium</keyword>
<keyword id="KW-0479">Metal-binding</keyword>
<protein>
    <recommendedName>
        <fullName evidence="1">Dihydroxy-acid dehydratase</fullName>
        <shortName evidence="1">DAD</shortName>
        <ecNumber evidence="1">4.2.1.9</ecNumber>
    </recommendedName>
</protein>
<proteinExistence type="inferred from homology"/>
<reference key="1">
    <citation type="journal article" date="2007" name="PLoS Genet.">
        <title>Patterns and implications of gene gain and loss in the evolution of Prochlorococcus.</title>
        <authorList>
            <person name="Kettler G.C."/>
            <person name="Martiny A.C."/>
            <person name="Huang K."/>
            <person name="Zucker J."/>
            <person name="Coleman M.L."/>
            <person name="Rodrigue S."/>
            <person name="Chen F."/>
            <person name="Lapidus A."/>
            <person name="Ferriera S."/>
            <person name="Johnson J."/>
            <person name="Steglich C."/>
            <person name="Church G.M."/>
            <person name="Richardson P."/>
            <person name="Chisholm S.W."/>
        </authorList>
    </citation>
    <scope>NUCLEOTIDE SEQUENCE [LARGE SCALE GENOMIC DNA]</scope>
    <source>
        <strain>MIT 9215</strain>
    </source>
</reference>
<dbReference type="EC" id="4.2.1.9" evidence="1"/>
<dbReference type="EMBL" id="CP000825">
    <property type="protein sequence ID" value="ABV50483.1"/>
    <property type="molecule type" value="Genomic_DNA"/>
</dbReference>
<dbReference type="RefSeq" id="WP_012007582.1">
    <property type="nucleotide sequence ID" value="NC_009840.1"/>
</dbReference>
<dbReference type="SMR" id="A8G4F2"/>
<dbReference type="STRING" id="93060.P9215_08681"/>
<dbReference type="KEGG" id="pmh:P9215_08681"/>
<dbReference type="eggNOG" id="COG0129">
    <property type="taxonomic scope" value="Bacteria"/>
</dbReference>
<dbReference type="HOGENOM" id="CLU_014271_4_2_3"/>
<dbReference type="OrthoDB" id="9807077at2"/>
<dbReference type="UniPathway" id="UPA00047">
    <property type="reaction ID" value="UER00057"/>
</dbReference>
<dbReference type="UniPathway" id="UPA00049">
    <property type="reaction ID" value="UER00061"/>
</dbReference>
<dbReference type="Proteomes" id="UP000002014">
    <property type="component" value="Chromosome"/>
</dbReference>
<dbReference type="GO" id="GO:0051537">
    <property type="term" value="F:2 iron, 2 sulfur cluster binding"/>
    <property type="evidence" value="ECO:0007669"/>
    <property type="project" value="UniProtKB-UniRule"/>
</dbReference>
<dbReference type="GO" id="GO:0004160">
    <property type="term" value="F:dihydroxy-acid dehydratase activity"/>
    <property type="evidence" value="ECO:0007669"/>
    <property type="project" value="UniProtKB-UniRule"/>
</dbReference>
<dbReference type="GO" id="GO:0000287">
    <property type="term" value="F:magnesium ion binding"/>
    <property type="evidence" value="ECO:0007669"/>
    <property type="project" value="UniProtKB-UniRule"/>
</dbReference>
<dbReference type="GO" id="GO:0009097">
    <property type="term" value="P:isoleucine biosynthetic process"/>
    <property type="evidence" value="ECO:0007669"/>
    <property type="project" value="UniProtKB-UniRule"/>
</dbReference>
<dbReference type="GO" id="GO:0009099">
    <property type="term" value="P:L-valine biosynthetic process"/>
    <property type="evidence" value="ECO:0007669"/>
    <property type="project" value="UniProtKB-UniRule"/>
</dbReference>
<dbReference type="FunFam" id="3.50.30.80:FF:000001">
    <property type="entry name" value="Dihydroxy-acid dehydratase"/>
    <property type="match status" value="1"/>
</dbReference>
<dbReference type="Gene3D" id="3.50.30.80">
    <property type="entry name" value="IlvD/EDD C-terminal domain-like"/>
    <property type="match status" value="1"/>
</dbReference>
<dbReference type="HAMAP" id="MF_00012">
    <property type="entry name" value="IlvD"/>
    <property type="match status" value="1"/>
</dbReference>
<dbReference type="InterPro" id="IPR050165">
    <property type="entry name" value="DHAD_IlvD/Edd"/>
</dbReference>
<dbReference type="InterPro" id="IPR042096">
    <property type="entry name" value="Dihydro-acid_dehy_C"/>
</dbReference>
<dbReference type="InterPro" id="IPR004404">
    <property type="entry name" value="DihydroxyA_deHydtase"/>
</dbReference>
<dbReference type="InterPro" id="IPR020558">
    <property type="entry name" value="DiOHA_6PGluconate_deHydtase_CS"/>
</dbReference>
<dbReference type="InterPro" id="IPR056740">
    <property type="entry name" value="ILV_EDD_C"/>
</dbReference>
<dbReference type="InterPro" id="IPR000581">
    <property type="entry name" value="ILV_EDD_N"/>
</dbReference>
<dbReference type="InterPro" id="IPR037237">
    <property type="entry name" value="IlvD/EDD_N"/>
</dbReference>
<dbReference type="NCBIfam" id="TIGR00110">
    <property type="entry name" value="ilvD"/>
    <property type="match status" value="1"/>
</dbReference>
<dbReference type="NCBIfam" id="NF002068">
    <property type="entry name" value="PRK00911.1"/>
    <property type="match status" value="1"/>
</dbReference>
<dbReference type="PANTHER" id="PTHR21000">
    <property type="entry name" value="DIHYDROXY-ACID DEHYDRATASE DAD"/>
    <property type="match status" value="1"/>
</dbReference>
<dbReference type="PANTHER" id="PTHR21000:SF5">
    <property type="entry name" value="DIHYDROXY-ACID DEHYDRATASE, MITOCHONDRIAL"/>
    <property type="match status" value="1"/>
</dbReference>
<dbReference type="Pfam" id="PF24877">
    <property type="entry name" value="ILV_EDD_C"/>
    <property type="match status" value="1"/>
</dbReference>
<dbReference type="Pfam" id="PF00920">
    <property type="entry name" value="ILVD_EDD_N"/>
    <property type="match status" value="1"/>
</dbReference>
<dbReference type="SUPFAM" id="SSF143975">
    <property type="entry name" value="IlvD/EDD N-terminal domain-like"/>
    <property type="match status" value="1"/>
</dbReference>
<dbReference type="SUPFAM" id="SSF52016">
    <property type="entry name" value="LeuD/IlvD-like"/>
    <property type="match status" value="1"/>
</dbReference>
<dbReference type="PROSITE" id="PS00886">
    <property type="entry name" value="ILVD_EDD_1"/>
    <property type="match status" value="1"/>
</dbReference>
<dbReference type="PROSITE" id="PS00887">
    <property type="entry name" value="ILVD_EDD_2"/>
    <property type="match status" value="1"/>
</dbReference>
<name>ILVD_PROM2</name>
<evidence type="ECO:0000255" key="1">
    <source>
        <dbReference type="HAMAP-Rule" id="MF_00012"/>
    </source>
</evidence>
<sequence length="557" mass="59039">MNKLRSSAITQGVQRSPNRSMLRAVGFNDEDFNKPIIGVANGYSTITPCNIGLNKLALKAEESIRRSGGMPQKFGTITVSDGISMGTEGMKYSLVSREVIADSIETACNAQSMDAVLAIGGCDKNMPGAMIAIARMNIPSIFIYGGTIKPGKLHGEDLTVVSAFEAVGQLTSGKINEKRLIEVEKNCIPGAGSCGGMFTANTMSAVIEVLGLSLPHSSTMAAEDLEKELSAEKSAEILVSAIKKNIRPLDLMTKKAFENAISVIMAVGGSTNAVLHILAIANTAGIDINIDDFERIRQKVPVICDLKPSGKFVTVDLHNAGGIPQVMKILLNAGLIHGECKNIEGKTITEYLQNIPDKPPSNQNVIRGIDYPLYKKGHLAILKGNLAKEGSVAKISGVKNPVLTGPAKIFESEEDCLKAILNNEIIAGDVVVVRNEGPVGGPGMREMLSPTSAIVGQGLGEKVALITDGRFSGGSYGLVVGHIAPEAAVGGNIALIKEGDLITVDAVKQLIEVDLSDEELEKRKNNWVKPKPKYKRGILSKYSKIVSTSSLGAVTDL</sequence>
<accession>A8G4F2</accession>
<organism>
    <name type="scientific">Prochlorococcus marinus (strain MIT 9215)</name>
    <dbReference type="NCBI Taxonomy" id="93060"/>
    <lineage>
        <taxon>Bacteria</taxon>
        <taxon>Bacillati</taxon>
        <taxon>Cyanobacteriota</taxon>
        <taxon>Cyanophyceae</taxon>
        <taxon>Synechococcales</taxon>
        <taxon>Prochlorococcaceae</taxon>
        <taxon>Prochlorococcus</taxon>
    </lineage>
</organism>
<gene>
    <name evidence="1" type="primary">ilvD</name>
    <name type="ordered locus">P9215_08681</name>
</gene>